<organism>
    <name type="scientific">Pseudomonas putida (strain GB-1)</name>
    <dbReference type="NCBI Taxonomy" id="76869"/>
    <lineage>
        <taxon>Bacteria</taxon>
        <taxon>Pseudomonadati</taxon>
        <taxon>Pseudomonadota</taxon>
        <taxon>Gammaproteobacteria</taxon>
        <taxon>Pseudomonadales</taxon>
        <taxon>Pseudomonadaceae</taxon>
        <taxon>Pseudomonas</taxon>
    </lineage>
</organism>
<sequence length="123" mass="13755">MATINQLVRQPRKRSVEKSDVPALQNCPQRRGVCTRVYTTTPRKPNSALRKVCRVRLTNGFEVSSYIGGEGHNLQEHSVVLIRGGRVKDLPGVRYHTVRGSLDTSGVKGRNQGRSKYGTKRPK</sequence>
<feature type="chain" id="PRO_1000080409" description="Small ribosomal subunit protein uS12">
    <location>
        <begin position="1"/>
        <end position="123"/>
    </location>
</feature>
<feature type="region of interest" description="Disordered" evidence="3">
    <location>
        <begin position="1"/>
        <end position="22"/>
    </location>
</feature>
<feature type="region of interest" description="Disordered" evidence="3">
    <location>
        <begin position="100"/>
        <end position="123"/>
    </location>
</feature>
<feature type="compositionally biased region" description="Basic residues" evidence="3">
    <location>
        <begin position="111"/>
        <end position="123"/>
    </location>
</feature>
<feature type="modified residue" description="3-methylthioaspartic acid" evidence="1">
    <location>
        <position position="89"/>
    </location>
</feature>
<protein>
    <recommendedName>
        <fullName evidence="2">Small ribosomal subunit protein uS12</fullName>
    </recommendedName>
    <alternativeName>
        <fullName evidence="4">30S ribosomal protein S12</fullName>
    </alternativeName>
</protein>
<evidence type="ECO:0000250" key="1"/>
<evidence type="ECO:0000255" key="2">
    <source>
        <dbReference type="HAMAP-Rule" id="MF_00403"/>
    </source>
</evidence>
<evidence type="ECO:0000256" key="3">
    <source>
        <dbReference type="SAM" id="MobiDB-lite"/>
    </source>
</evidence>
<evidence type="ECO:0000305" key="4"/>
<name>RS12_PSEPG</name>
<comment type="function">
    <text evidence="2">With S4 and S5 plays an important role in translational accuracy.</text>
</comment>
<comment type="function">
    <text evidence="2">Interacts with and stabilizes bases of the 16S rRNA that are involved in tRNA selection in the A site and with the mRNA backbone. Located at the interface of the 30S and 50S subunits, it traverses the body of the 30S subunit contacting proteins on the other side and probably holding the rRNA structure together. The combined cluster of proteins S8, S12 and S17 appears to hold together the shoulder and platform of the 30S subunit.</text>
</comment>
<comment type="subunit">
    <text evidence="2">Part of the 30S ribosomal subunit. Contacts proteins S8 and S17. May interact with IF1 in the 30S initiation complex.</text>
</comment>
<comment type="similarity">
    <text evidence="2">Belongs to the universal ribosomal protein uS12 family.</text>
</comment>
<keyword id="KW-0488">Methylation</keyword>
<keyword id="KW-0687">Ribonucleoprotein</keyword>
<keyword id="KW-0689">Ribosomal protein</keyword>
<keyword id="KW-0694">RNA-binding</keyword>
<keyword id="KW-0699">rRNA-binding</keyword>
<keyword id="KW-0820">tRNA-binding</keyword>
<gene>
    <name evidence="2" type="primary">rpsL</name>
    <name type="ordered locus">PputGB1_0479</name>
</gene>
<reference key="1">
    <citation type="submission" date="2008-01" db="EMBL/GenBank/DDBJ databases">
        <title>Complete sequence of Pseudomonas putida GB-1.</title>
        <authorList>
            <consortium name="US DOE Joint Genome Institute"/>
            <person name="Copeland A."/>
            <person name="Lucas S."/>
            <person name="Lapidus A."/>
            <person name="Barry K."/>
            <person name="Glavina del Rio T."/>
            <person name="Dalin E."/>
            <person name="Tice H."/>
            <person name="Pitluck S."/>
            <person name="Bruce D."/>
            <person name="Goodwin L."/>
            <person name="Chertkov O."/>
            <person name="Brettin T."/>
            <person name="Detter J.C."/>
            <person name="Han C."/>
            <person name="Kuske C.R."/>
            <person name="Schmutz J."/>
            <person name="Larimer F."/>
            <person name="Land M."/>
            <person name="Hauser L."/>
            <person name="Kyrpides N."/>
            <person name="Kim E."/>
            <person name="McCarthy J.K."/>
            <person name="Richardson P."/>
        </authorList>
    </citation>
    <scope>NUCLEOTIDE SEQUENCE [LARGE SCALE GENOMIC DNA]</scope>
    <source>
        <strain>GB-1</strain>
    </source>
</reference>
<proteinExistence type="inferred from homology"/>
<accession>B0KK62</accession>
<dbReference type="EMBL" id="CP000926">
    <property type="protein sequence ID" value="ABY96390.1"/>
    <property type="molecule type" value="Genomic_DNA"/>
</dbReference>
<dbReference type="RefSeq" id="WP_012270235.1">
    <property type="nucleotide sequence ID" value="NC_010322.1"/>
</dbReference>
<dbReference type="SMR" id="B0KK62"/>
<dbReference type="KEGG" id="ppg:PputGB1_0479"/>
<dbReference type="eggNOG" id="COG0048">
    <property type="taxonomic scope" value="Bacteria"/>
</dbReference>
<dbReference type="HOGENOM" id="CLU_104295_1_2_6"/>
<dbReference type="Proteomes" id="UP000002157">
    <property type="component" value="Chromosome"/>
</dbReference>
<dbReference type="GO" id="GO:0015935">
    <property type="term" value="C:small ribosomal subunit"/>
    <property type="evidence" value="ECO:0007669"/>
    <property type="project" value="InterPro"/>
</dbReference>
<dbReference type="GO" id="GO:0019843">
    <property type="term" value="F:rRNA binding"/>
    <property type="evidence" value="ECO:0007669"/>
    <property type="project" value="UniProtKB-UniRule"/>
</dbReference>
<dbReference type="GO" id="GO:0003735">
    <property type="term" value="F:structural constituent of ribosome"/>
    <property type="evidence" value="ECO:0007669"/>
    <property type="project" value="InterPro"/>
</dbReference>
<dbReference type="GO" id="GO:0000049">
    <property type="term" value="F:tRNA binding"/>
    <property type="evidence" value="ECO:0007669"/>
    <property type="project" value="UniProtKB-UniRule"/>
</dbReference>
<dbReference type="GO" id="GO:0006412">
    <property type="term" value="P:translation"/>
    <property type="evidence" value="ECO:0007669"/>
    <property type="project" value="UniProtKB-UniRule"/>
</dbReference>
<dbReference type="CDD" id="cd03368">
    <property type="entry name" value="Ribosomal_S12"/>
    <property type="match status" value="1"/>
</dbReference>
<dbReference type="FunFam" id="2.40.50.140:FF:000001">
    <property type="entry name" value="30S ribosomal protein S12"/>
    <property type="match status" value="1"/>
</dbReference>
<dbReference type="Gene3D" id="2.40.50.140">
    <property type="entry name" value="Nucleic acid-binding proteins"/>
    <property type="match status" value="1"/>
</dbReference>
<dbReference type="HAMAP" id="MF_00403_B">
    <property type="entry name" value="Ribosomal_uS12_B"/>
    <property type="match status" value="1"/>
</dbReference>
<dbReference type="InterPro" id="IPR012340">
    <property type="entry name" value="NA-bd_OB-fold"/>
</dbReference>
<dbReference type="InterPro" id="IPR006032">
    <property type="entry name" value="Ribosomal_uS12"/>
</dbReference>
<dbReference type="InterPro" id="IPR005679">
    <property type="entry name" value="Ribosomal_uS12_bac"/>
</dbReference>
<dbReference type="NCBIfam" id="TIGR00981">
    <property type="entry name" value="rpsL_bact"/>
    <property type="match status" value="1"/>
</dbReference>
<dbReference type="PANTHER" id="PTHR11652">
    <property type="entry name" value="30S RIBOSOMAL PROTEIN S12 FAMILY MEMBER"/>
    <property type="match status" value="1"/>
</dbReference>
<dbReference type="Pfam" id="PF00164">
    <property type="entry name" value="Ribosom_S12_S23"/>
    <property type="match status" value="1"/>
</dbReference>
<dbReference type="PIRSF" id="PIRSF002133">
    <property type="entry name" value="Ribosomal_S12/S23"/>
    <property type="match status" value="1"/>
</dbReference>
<dbReference type="PRINTS" id="PR01034">
    <property type="entry name" value="RIBOSOMALS12"/>
</dbReference>
<dbReference type="SUPFAM" id="SSF50249">
    <property type="entry name" value="Nucleic acid-binding proteins"/>
    <property type="match status" value="1"/>
</dbReference>
<dbReference type="PROSITE" id="PS00055">
    <property type="entry name" value="RIBOSOMAL_S12"/>
    <property type="match status" value="1"/>
</dbReference>